<gene>
    <name evidence="1" type="primary">recR</name>
    <name type="ordered locus">BAB1_0029</name>
</gene>
<evidence type="ECO:0000255" key="1">
    <source>
        <dbReference type="HAMAP-Rule" id="MF_00017"/>
    </source>
</evidence>
<name>RECR_BRUA2</name>
<keyword id="KW-0227">DNA damage</keyword>
<keyword id="KW-0233">DNA recombination</keyword>
<keyword id="KW-0234">DNA repair</keyword>
<keyword id="KW-0479">Metal-binding</keyword>
<keyword id="KW-1185">Reference proteome</keyword>
<keyword id="KW-0862">Zinc</keyword>
<keyword id="KW-0863">Zinc-finger</keyword>
<accession>Q2YPN0</accession>
<reference key="1">
    <citation type="journal article" date="2005" name="Infect. Immun.">
        <title>Whole-genome analyses of speciation events in pathogenic Brucellae.</title>
        <authorList>
            <person name="Chain P.S."/>
            <person name="Comerci D.J."/>
            <person name="Tolmasky M.E."/>
            <person name="Larimer F.W."/>
            <person name="Malfatti S.A."/>
            <person name="Vergez L.M."/>
            <person name="Aguero F."/>
            <person name="Land M.L."/>
            <person name="Ugalde R.A."/>
            <person name="Garcia E."/>
        </authorList>
    </citation>
    <scope>NUCLEOTIDE SEQUENCE [LARGE SCALE GENOMIC DNA]</scope>
    <source>
        <strain>2308</strain>
    </source>
</reference>
<organism>
    <name type="scientific">Brucella abortus (strain 2308)</name>
    <dbReference type="NCBI Taxonomy" id="359391"/>
    <lineage>
        <taxon>Bacteria</taxon>
        <taxon>Pseudomonadati</taxon>
        <taxon>Pseudomonadota</taxon>
        <taxon>Alphaproteobacteria</taxon>
        <taxon>Hyphomicrobiales</taxon>
        <taxon>Brucellaceae</taxon>
        <taxon>Brucella/Ochrobactrum group</taxon>
        <taxon>Brucella</taxon>
    </lineage>
</organism>
<sequence length="201" mass="21556">MSKRIAGPEIERLIQLLARVPGLGPRSARRAALHLIKKKEALLVPLGGAMQEAAEKVRICSCCGNVDTSDPCTICTDERRDPATLIVVEDVSDLWALERAGTMNVRYHVLGGRLSPLDGIGPDDLNIKGLVERVASGAIKEVILAVNATVEGQTTAHYITDQLSNFDVRVTRLAHGVPVGGELDYLDEGTLAAALRARTTL</sequence>
<comment type="function">
    <text evidence="1">May play a role in DNA repair. It seems to be involved in an RecBC-independent recombinational process of DNA repair. It may act with RecF and RecO.</text>
</comment>
<comment type="similarity">
    <text evidence="1">Belongs to the RecR family.</text>
</comment>
<feature type="chain" id="PRO_1000001514" description="Recombination protein RecR">
    <location>
        <begin position="1"/>
        <end position="201"/>
    </location>
</feature>
<feature type="domain" description="Toprim" evidence="1">
    <location>
        <begin position="83"/>
        <end position="178"/>
    </location>
</feature>
<feature type="zinc finger region" description="C4-type" evidence="1">
    <location>
        <begin position="60"/>
        <end position="75"/>
    </location>
</feature>
<proteinExistence type="inferred from homology"/>
<dbReference type="EMBL" id="AM040264">
    <property type="protein sequence ID" value="CAJ09985.1"/>
    <property type="molecule type" value="Genomic_DNA"/>
</dbReference>
<dbReference type="RefSeq" id="WP_002965279.1">
    <property type="nucleotide sequence ID" value="NZ_KN046823.1"/>
</dbReference>
<dbReference type="SMR" id="Q2YPN0"/>
<dbReference type="STRING" id="359391.BAB1_0029"/>
<dbReference type="GeneID" id="97534533"/>
<dbReference type="KEGG" id="bmf:BAB1_0029"/>
<dbReference type="PATRIC" id="fig|359391.11.peg.1453"/>
<dbReference type="HOGENOM" id="CLU_060739_1_1_5"/>
<dbReference type="PhylomeDB" id="Q2YPN0"/>
<dbReference type="Proteomes" id="UP000002719">
    <property type="component" value="Chromosome I"/>
</dbReference>
<dbReference type="GO" id="GO:0003677">
    <property type="term" value="F:DNA binding"/>
    <property type="evidence" value="ECO:0007669"/>
    <property type="project" value="UniProtKB-UniRule"/>
</dbReference>
<dbReference type="GO" id="GO:0008270">
    <property type="term" value="F:zinc ion binding"/>
    <property type="evidence" value="ECO:0007669"/>
    <property type="project" value="UniProtKB-KW"/>
</dbReference>
<dbReference type="GO" id="GO:0006310">
    <property type="term" value="P:DNA recombination"/>
    <property type="evidence" value="ECO:0007669"/>
    <property type="project" value="UniProtKB-UniRule"/>
</dbReference>
<dbReference type="GO" id="GO:0006281">
    <property type="term" value="P:DNA repair"/>
    <property type="evidence" value="ECO:0007669"/>
    <property type="project" value="UniProtKB-UniRule"/>
</dbReference>
<dbReference type="CDD" id="cd01025">
    <property type="entry name" value="TOPRIM_recR"/>
    <property type="match status" value="1"/>
</dbReference>
<dbReference type="Gene3D" id="3.40.1360.10">
    <property type="match status" value="1"/>
</dbReference>
<dbReference type="Gene3D" id="6.10.250.240">
    <property type="match status" value="1"/>
</dbReference>
<dbReference type="Gene3D" id="1.10.8.420">
    <property type="entry name" value="RecR Domain 1"/>
    <property type="match status" value="1"/>
</dbReference>
<dbReference type="HAMAP" id="MF_00017">
    <property type="entry name" value="RecR"/>
    <property type="match status" value="1"/>
</dbReference>
<dbReference type="InterPro" id="IPR000093">
    <property type="entry name" value="DNA_Rcmb_RecR"/>
</dbReference>
<dbReference type="InterPro" id="IPR023627">
    <property type="entry name" value="Rcmb_RecR"/>
</dbReference>
<dbReference type="InterPro" id="IPR015967">
    <property type="entry name" value="Rcmb_RecR_Znf"/>
</dbReference>
<dbReference type="InterPro" id="IPR006171">
    <property type="entry name" value="TOPRIM_dom"/>
</dbReference>
<dbReference type="InterPro" id="IPR034137">
    <property type="entry name" value="TOPRIM_RecR"/>
</dbReference>
<dbReference type="NCBIfam" id="TIGR00615">
    <property type="entry name" value="recR"/>
    <property type="match status" value="1"/>
</dbReference>
<dbReference type="PANTHER" id="PTHR30446">
    <property type="entry name" value="RECOMBINATION PROTEIN RECR"/>
    <property type="match status" value="1"/>
</dbReference>
<dbReference type="PANTHER" id="PTHR30446:SF0">
    <property type="entry name" value="RECOMBINATION PROTEIN RECR"/>
    <property type="match status" value="1"/>
</dbReference>
<dbReference type="Pfam" id="PF21175">
    <property type="entry name" value="RecR_C"/>
    <property type="match status" value="1"/>
</dbReference>
<dbReference type="Pfam" id="PF21176">
    <property type="entry name" value="RecR_HhH"/>
    <property type="match status" value="1"/>
</dbReference>
<dbReference type="Pfam" id="PF02132">
    <property type="entry name" value="RecR_ZnF"/>
    <property type="match status" value="1"/>
</dbReference>
<dbReference type="Pfam" id="PF13662">
    <property type="entry name" value="Toprim_4"/>
    <property type="match status" value="1"/>
</dbReference>
<dbReference type="SMART" id="SM00493">
    <property type="entry name" value="TOPRIM"/>
    <property type="match status" value="1"/>
</dbReference>
<dbReference type="SUPFAM" id="SSF111304">
    <property type="entry name" value="Recombination protein RecR"/>
    <property type="match status" value="1"/>
</dbReference>
<dbReference type="PROSITE" id="PS01300">
    <property type="entry name" value="RECR"/>
    <property type="match status" value="1"/>
</dbReference>
<dbReference type="PROSITE" id="PS50880">
    <property type="entry name" value="TOPRIM"/>
    <property type="match status" value="1"/>
</dbReference>
<protein>
    <recommendedName>
        <fullName evidence="1">Recombination protein RecR</fullName>
    </recommendedName>
</protein>